<accession>Q9I9L5</accession>
<comment type="function">
    <text>Growth hormone plays an important role in growth control and is involved in the regulation of several anabolic processes. Implicated as an osmoregulatory substance important for seawater adaptation.</text>
</comment>
<comment type="subcellular location">
    <subcellularLocation>
        <location>Secreted</location>
    </subcellularLocation>
</comment>
<comment type="similarity">
    <text evidence="2">Belongs to the somatotropin/prolactin family.</text>
</comment>
<dbReference type="EMBL" id="AF236091">
    <property type="protein sequence ID" value="AAF36995.1"/>
    <property type="molecule type" value="mRNA"/>
</dbReference>
<dbReference type="SMR" id="Q9I9L5"/>
<dbReference type="GO" id="GO:0005615">
    <property type="term" value="C:extracellular space"/>
    <property type="evidence" value="ECO:0007669"/>
    <property type="project" value="InterPro"/>
</dbReference>
<dbReference type="GO" id="GO:0070186">
    <property type="term" value="F:growth hormone activity"/>
    <property type="evidence" value="ECO:0007669"/>
    <property type="project" value="TreeGrafter"/>
</dbReference>
<dbReference type="GO" id="GO:0005131">
    <property type="term" value="F:growth hormone receptor binding"/>
    <property type="evidence" value="ECO:0007669"/>
    <property type="project" value="InterPro"/>
</dbReference>
<dbReference type="GO" id="GO:0046872">
    <property type="term" value="F:metal ion binding"/>
    <property type="evidence" value="ECO:0007669"/>
    <property type="project" value="UniProtKB-KW"/>
</dbReference>
<dbReference type="GO" id="GO:0048513">
    <property type="term" value="P:animal organ development"/>
    <property type="evidence" value="ECO:0007669"/>
    <property type="project" value="TreeGrafter"/>
</dbReference>
<dbReference type="GO" id="GO:0060396">
    <property type="term" value="P:growth hormone receptor signaling pathway"/>
    <property type="evidence" value="ECO:0007669"/>
    <property type="project" value="TreeGrafter"/>
</dbReference>
<dbReference type="GO" id="GO:0045927">
    <property type="term" value="P:positive regulation of growth"/>
    <property type="evidence" value="ECO:0007669"/>
    <property type="project" value="TreeGrafter"/>
</dbReference>
<dbReference type="GO" id="GO:0046427">
    <property type="term" value="P:positive regulation of receptor signaling pathway via JAK-STAT"/>
    <property type="evidence" value="ECO:0007669"/>
    <property type="project" value="TreeGrafter"/>
</dbReference>
<dbReference type="GO" id="GO:0031667">
    <property type="term" value="P:response to nutrient levels"/>
    <property type="evidence" value="ECO:0007669"/>
    <property type="project" value="TreeGrafter"/>
</dbReference>
<dbReference type="CDD" id="cd10285">
    <property type="entry name" value="somatotropin_like"/>
    <property type="match status" value="1"/>
</dbReference>
<dbReference type="FunFam" id="1.20.1250.10:FF:000009">
    <property type="entry name" value="Growth hormone"/>
    <property type="match status" value="1"/>
</dbReference>
<dbReference type="Gene3D" id="1.20.1250.10">
    <property type="match status" value="1"/>
</dbReference>
<dbReference type="InterPro" id="IPR009079">
    <property type="entry name" value="4_helix_cytokine-like_core"/>
</dbReference>
<dbReference type="InterPro" id="IPR034975">
    <property type="entry name" value="Somatotropin"/>
</dbReference>
<dbReference type="InterPro" id="IPR001400">
    <property type="entry name" value="Somatotropin/Prolactin"/>
</dbReference>
<dbReference type="InterPro" id="IPR018116">
    <property type="entry name" value="Somatotropin_CS"/>
</dbReference>
<dbReference type="PANTHER" id="PTHR11417:SF2">
    <property type="entry name" value="SOMATOTROPIN"/>
    <property type="match status" value="1"/>
</dbReference>
<dbReference type="PANTHER" id="PTHR11417">
    <property type="entry name" value="SOMATOTROPIN,PROLACTIN"/>
    <property type="match status" value="1"/>
</dbReference>
<dbReference type="Pfam" id="PF00103">
    <property type="entry name" value="Hormone_1"/>
    <property type="match status" value="1"/>
</dbReference>
<dbReference type="PRINTS" id="PR00836">
    <property type="entry name" value="SOMATOTROPIN"/>
</dbReference>
<dbReference type="SUPFAM" id="SSF47266">
    <property type="entry name" value="4-helical cytokines"/>
    <property type="match status" value="1"/>
</dbReference>
<dbReference type="PROSITE" id="PS00266">
    <property type="entry name" value="SOMATOTROPIN_1"/>
    <property type="match status" value="1"/>
</dbReference>
<dbReference type="PROSITE" id="PS00338">
    <property type="entry name" value="SOMATOTROPIN_2"/>
    <property type="match status" value="1"/>
</dbReference>
<keyword id="KW-1015">Disulfide bond</keyword>
<keyword id="KW-0372">Hormone</keyword>
<keyword id="KW-0479">Metal-binding</keyword>
<keyword id="KW-0873">Pyrrolidone carboxylic acid</keyword>
<keyword id="KW-0964">Secreted</keyword>
<keyword id="KW-0732">Signal</keyword>
<keyword id="KW-0862">Zinc</keyword>
<protein>
    <recommendedName>
        <fullName>Somatotropin</fullName>
    </recommendedName>
    <alternativeName>
        <fullName>Growth hormone</fullName>
    </alternativeName>
</protein>
<proteinExistence type="evidence at transcript level"/>
<organism>
    <name type="scientific">Odontesthes argentinensis</name>
    <name type="common">Marine silverside</name>
    <name type="synonym">Atherina argentinensis</name>
    <dbReference type="NCBI Taxonomy" id="103866"/>
    <lineage>
        <taxon>Eukaryota</taxon>
        <taxon>Metazoa</taxon>
        <taxon>Chordata</taxon>
        <taxon>Craniata</taxon>
        <taxon>Vertebrata</taxon>
        <taxon>Euteleostomi</taxon>
        <taxon>Actinopterygii</taxon>
        <taxon>Neopterygii</taxon>
        <taxon>Teleostei</taxon>
        <taxon>Neoteleostei</taxon>
        <taxon>Acanthomorphata</taxon>
        <taxon>Ovalentaria</taxon>
        <taxon>Atherinomorphae</taxon>
        <taxon>Atheriniformes</taxon>
        <taxon>Atherinopsidae</taxon>
        <taxon>Atherinopsinae</taxon>
        <taxon>Odontesthes</taxon>
    </lineage>
</organism>
<feature type="signal peptide" evidence="1">
    <location>
        <begin position="1"/>
        <end position="17"/>
    </location>
</feature>
<feature type="chain" id="PRO_0000033041" description="Somatotropin">
    <location>
        <begin position="18"/>
        <end position="204"/>
    </location>
</feature>
<feature type="binding site" evidence="1">
    <location>
        <position position="36"/>
    </location>
    <ligand>
        <name>Zn(2+)</name>
        <dbReference type="ChEBI" id="CHEBI:29105"/>
    </ligand>
</feature>
<feature type="binding site" evidence="1">
    <location>
        <position position="186"/>
    </location>
    <ligand>
        <name>Zn(2+)</name>
        <dbReference type="ChEBI" id="CHEBI:29105"/>
    </ligand>
</feature>
<feature type="modified residue" description="Pyrrolidone carboxylic acid" evidence="1">
    <location>
        <position position="18"/>
    </location>
</feature>
<feature type="disulfide bond" evidence="1">
    <location>
        <begin position="69"/>
        <end position="177"/>
    </location>
</feature>
<feature type="disulfide bond" evidence="1">
    <location>
        <begin position="194"/>
        <end position="202"/>
    </location>
</feature>
<gene>
    <name type="primary">gh</name>
</gene>
<evidence type="ECO:0000250" key="1"/>
<evidence type="ECO:0000305" key="2"/>
<name>SOMA_ODOAR</name>
<sequence>MDRAILLLSVVCLVVSSQPIADSQRLFSIAVSRVQHLHLLAQRLFSDFESSLQTEEQRQLNKIFLQDFCNSDYIISPIDKHETQRSSVLKLLSISYGLVESWEFPSRFLSGGSAPRTQISPKLSELKTGILLLIRANQDPAEIFSDPSAPQVPSYGNYYQSLGADESLRRTYELLACFKKDMHKVETYLTVAKCRLSPEANCTL</sequence>
<reference key="1">
    <citation type="submission" date="2000-02" db="EMBL/GenBank/DDBJ databases">
        <title>Isolation and characterization of the marine silverside fish Odontesthes argentinensis (Atheriniformes, Atherinopsidae) growth hormone-encoding cDNA.</title>
        <authorList>
            <person name="Levy J.A."/>
            <person name="Marins L.F."/>
            <person name="Folch J.M."/>
            <person name="Sanchez A."/>
        </authorList>
    </citation>
    <scope>NUCLEOTIDE SEQUENCE [MRNA]</scope>
    <source>
        <tissue>Pituitary</tissue>
    </source>
</reference>